<name>TBB7_GOSHI</name>
<reference key="1">
    <citation type="submission" date="2003-07" db="EMBL/GenBank/DDBJ databases">
        <title>Cloning and expression of nine tubulin genes from elongating cotton fiber cells.</title>
        <authorList>
            <person name="Feng J.-X."/>
            <person name="Wei G."/>
            <person name="Wang L."/>
            <person name="Ji S.-J."/>
            <person name="Zhang T.-Z."/>
            <person name="Zhu Y.-X."/>
        </authorList>
    </citation>
    <scope>NUCLEOTIDE SEQUENCE [MRNA]</scope>
</reference>
<accession>Q6VAF5</accession>
<comment type="function">
    <text>Tubulin is the major constituent of microtubules, a cylinder consisting of laterally associated linear protofilaments composed of alpha- and beta-tubulin heterodimers. Microtubules grow by the addition of GTP-tubulin dimers to the microtubule end, where a stabilizing cap forms. Below the cap, tubulin dimers are in GDP-bound state, owing to GTPase activity of alpha-tubulin.</text>
</comment>
<comment type="cofactor">
    <cofactor evidence="1">
        <name>Mg(2+)</name>
        <dbReference type="ChEBI" id="CHEBI:18420"/>
    </cofactor>
</comment>
<comment type="subunit">
    <text>Dimer of alpha and beta chains. A typical microtubule is a hollow water-filled tube with an outer diameter of 25 nm and an inner diameter of 15 nM. Alpha-beta heterodimers associate head-to-tail to form protofilaments running lengthwise along the microtubule wall with the beta-tubulin subunit facing the microtubule plus end conferring a structural polarity. Microtubules usually have 13 protofilaments but different protofilament numbers can be found in some organisms and specialized cells.</text>
</comment>
<comment type="subcellular location">
    <subcellularLocation>
        <location>Cytoplasm</location>
        <location>Cytoskeleton</location>
    </subcellularLocation>
</comment>
<comment type="similarity">
    <text evidence="3">Belongs to the tubulin family.</text>
</comment>
<dbReference type="EMBL" id="AY345609">
    <property type="protein sequence ID" value="AAQ92667.1"/>
    <property type="molecule type" value="mRNA"/>
</dbReference>
<dbReference type="RefSeq" id="XP_016755732.1">
    <property type="nucleotide sequence ID" value="XM_016900243.1"/>
</dbReference>
<dbReference type="SMR" id="Q6VAF5"/>
<dbReference type="STRING" id="3635.Q6VAF5"/>
<dbReference type="PaxDb" id="3635-Q6VAF5"/>
<dbReference type="GeneID" id="107963775"/>
<dbReference type="KEGG" id="ghi:107963775"/>
<dbReference type="OMA" id="EVDSQMF"/>
<dbReference type="Proteomes" id="UP000189702">
    <property type="component" value="Chromosome 12"/>
</dbReference>
<dbReference type="GO" id="GO:0005737">
    <property type="term" value="C:cytoplasm"/>
    <property type="evidence" value="ECO:0000318"/>
    <property type="project" value="GO_Central"/>
</dbReference>
<dbReference type="GO" id="GO:0005874">
    <property type="term" value="C:microtubule"/>
    <property type="evidence" value="ECO:0000318"/>
    <property type="project" value="GO_Central"/>
</dbReference>
<dbReference type="GO" id="GO:0005525">
    <property type="term" value="F:GTP binding"/>
    <property type="evidence" value="ECO:0000318"/>
    <property type="project" value="GO_Central"/>
</dbReference>
<dbReference type="GO" id="GO:0003924">
    <property type="term" value="F:GTPase activity"/>
    <property type="evidence" value="ECO:0007669"/>
    <property type="project" value="InterPro"/>
</dbReference>
<dbReference type="GO" id="GO:0046872">
    <property type="term" value="F:metal ion binding"/>
    <property type="evidence" value="ECO:0007669"/>
    <property type="project" value="UniProtKB-KW"/>
</dbReference>
<dbReference type="GO" id="GO:0005200">
    <property type="term" value="F:structural constituent of cytoskeleton"/>
    <property type="evidence" value="ECO:0000318"/>
    <property type="project" value="GO_Central"/>
</dbReference>
<dbReference type="GO" id="GO:0016049">
    <property type="term" value="P:cell growth"/>
    <property type="evidence" value="ECO:0000315"/>
    <property type="project" value="AgBase"/>
</dbReference>
<dbReference type="GO" id="GO:0000226">
    <property type="term" value="P:microtubule cytoskeleton organization"/>
    <property type="evidence" value="ECO:0000318"/>
    <property type="project" value="GO_Central"/>
</dbReference>
<dbReference type="GO" id="GO:0000278">
    <property type="term" value="P:mitotic cell cycle"/>
    <property type="evidence" value="ECO:0000318"/>
    <property type="project" value="GO_Central"/>
</dbReference>
<dbReference type="GO" id="GO:0090378">
    <property type="term" value="P:seed trichome elongation"/>
    <property type="evidence" value="ECO:0000315"/>
    <property type="project" value="AgBase"/>
</dbReference>
<dbReference type="CDD" id="cd02187">
    <property type="entry name" value="beta_tubulin"/>
    <property type="match status" value="1"/>
</dbReference>
<dbReference type="FunFam" id="1.10.287.600:FF:000002">
    <property type="entry name" value="Tubulin beta chain"/>
    <property type="match status" value="1"/>
</dbReference>
<dbReference type="FunFam" id="3.30.1330.20:FF:000002">
    <property type="entry name" value="Tubulin beta chain"/>
    <property type="match status" value="1"/>
</dbReference>
<dbReference type="FunFam" id="3.40.50.1440:FF:000005">
    <property type="entry name" value="Tubulin beta chain"/>
    <property type="match status" value="1"/>
</dbReference>
<dbReference type="Gene3D" id="1.10.287.600">
    <property type="entry name" value="Helix hairpin bin"/>
    <property type="match status" value="1"/>
</dbReference>
<dbReference type="Gene3D" id="3.30.1330.20">
    <property type="entry name" value="Tubulin/FtsZ, C-terminal domain"/>
    <property type="match status" value="1"/>
</dbReference>
<dbReference type="Gene3D" id="3.40.50.1440">
    <property type="entry name" value="Tubulin/FtsZ, GTPase domain"/>
    <property type="match status" value="1"/>
</dbReference>
<dbReference type="InterPro" id="IPR013838">
    <property type="entry name" value="Beta-tubulin_BS"/>
</dbReference>
<dbReference type="InterPro" id="IPR002453">
    <property type="entry name" value="Beta_tubulin"/>
</dbReference>
<dbReference type="InterPro" id="IPR008280">
    <property type="entry name" value="Tub_FtsZ_C"/>
</dbReference>
<dbReference type="InterPro" id="IPR000217">
    <property type="entry name" value="Tubulin"/>
</dbReference>
<dbReference type="InterPro" id="IPR037103">
    <property type="entry name" value="Tubulin/FtsZ-like_C"/>
</dbReference>
<dbReference type="InterPro" id="IPR018316">
    <property type="entry name" value="Tubulin/FtsZ_2-layer-sand-dom"/>
</dbReference>
<dbReference type="InterPro" id="IPR036525">
    <property type="entry name" value="Tubulin/FtsZ_GTPase_sf"/>
</dbReference>
<dbReference type="InterPro" id="IPR023123">
    <property type="entry name" value="Tubulin_C"/>
</dbReference>
<dbReference type="InterPro" id="IPR017975">
    <property type="entry name" value="Tubulin_CS"/>
</dbReference>
<dbReference type="InterPro" id="IPR003008">
    <property type="entry name" value="Tubulin_FtsZ_GTPase"/>
</dbReference>
<dbReference type="PANTHER" id="PTHR11588">
    <property type="entry name" value="TUBULIN"/>
    <property type="match status" value="1"/>
</dbReference>
<dbReference type="Pfam" id="PF00091">
    <property type="entry name" value="Tubulin"/>
    <property type="match status" value="1"/>
</dbReference>
<dbReference type="Pfam" id="PF03953">
    <property type="entry name" value="Tubulin_C"/>
    <property type="match status" value="1"/>
</dbReference>
<dbReference type="PRINTS" id="PR01163">
    <property type="entry name" value="BETATUBULIN"/>
</dbReference>
<dbReference type="PRINTS" id="PR01161">
    <property type="entry name" value="TUBULIN"/>
</dbReference>
<dbReference type="SMART" id="SM00864">
    <property type="entry name" value="Tubulin"/>
    <property type="match status" value="1"/>
</dbReference>
<dbReference type="SMART" id="SM00865">
    <property type="entry name" value="Tubulin_C"/>
    <property type="match status" value="1"/>
</dbReference>
<dbReference type="SUPFAM" id="SSF55307">
    <property type="entry name" value="Tubulin C-terminal domain-like"/>
    <property type="match status" value="1"/>
</dbReference>
<dbReference type="SUPFAM" id="SSF52490">
    <property type="entry name" value="Tubulin nucleotide-binding domain-like"/>
    <property type="match status" value="1"/>
</dbReference>
<dbReference type="PROSITE" id="PS00227">
    <property type="entry name" value="TUBULIN"/>
    <property type="match status" value="1"/>
</dbReference>
<dbReference type="PROSITE" id="PS00228">
    <property type="entry name" value="TUBULIN_B_AUTOREG"/>
    <property type="match status" value="1"/>
</dbReference>
<evidence type="ECO:0000250" key="1">
    <source>
        <dbReference type="UniProtKB" id="P68363"/>
    </source>
</evidence>
<evidence type="ECO:0000250" key="2">
    <source>
        <dbReference type="UniProtKB" id="Q13509"/>
    </source>
</evidence>
<evidence type="ECO:0000305" key="3"/>
<organism>
    <name type="scientific">Gossypium hirsutum</name>
    <name type="common">Upland cotton</name>
    <name type="synonym">Gossypium mexicanum</name>
    <dbReference type="NCBI Taxonomy" id="3635"/>
    <lineage>
        <taxon>Eukaryota</taxon>
        <taxon>Viridiplantae</taxon>
        <taxon>Streptophyta</taxon>
        <taxon>Embryophyta</taxon>
        <taxon>Tracheophyta</taxon>
        <taxon>Spermatophyta</taxon>
        <taxon>Magnoliopsida</taxon>
        <taxon>eudicotyledons</taxon>
        <taxon>Gunneridae</taxon>
        <taxon>Pentapetalae</taxon>
        <taxon>rosids</taxon>
        <taxon>malvids</taxon>
        <taxon>Malvales</taxon>
        <taxon>Malvaceae</taxon>
        <taxon>Malvoideae</taxon>
        <taxon>Gossypium</taxon>
    </lineage>
</organism>
<feature type="chain" id="PRO_0000048350" description="Tubulin beta-7 chain">
    <location>
        <begin position="1"/>
        <end position="444"/>
    </location>
</feature>
<feature type="binding site" evidence="2">
    <location>
        <position position="11"/>
    </location>
    <ligand>
        <name>GTP</name>
        <dbReference type="ChEBI" id="CHEBI:37565"/>
    </ligand>
</feature>
<feature type="binding site" evidence="1">
    <location>
        <position position="69"/>
    </location>
    <ligand>
        <name>GTP</name>
        <dbReference type="ChEBI" id="CHEBI:37565"/>
    </ligand>
</feature>
<feature type="binding site" evidence="1">
    <location>
        <position position="69"/>
    </location>
    <ligand>
        <name>Mg(2+)</name>
        <dbReference type="ChEBI" id="CHEBI:18420"/>
    </ligand>
</feature>
<feature type="binding site" evidence="2">
    <location>
        <position position="138"/>
    </location>
    <ligand>
        <name>GTP</name>
        <dbReference type="ChEBI" id="CHEBI:37565"/>
    </ligand>
</feature>
<feature type="binding site" evidence="2">
    <location>
        <position position="142"/>
    </location>
    <ligand>
        <name>GTP</name>
        <dbReference type="ChEBI" id="CHEBI:37565"/>
    </ligand>
</feature>
<feature type="binding site" evidence="2">
    <location>
        <position position="143"/>
    </location>
    <ligand>
        <name>GTP</name>
        <dbReference type="ChEBI" id="CHEBI:37565"/>
    </ligand>
</feature>
<feature type="binding site" evidence="2">
    <location>
        <position position="144"/>
    </location>
    <ligand>
        <name>GTP</name>
        <dbReference type="ChEBI" id="CHEBI:37565"/>
    </ligand>
</feature>
<feature type="binding site" evidence="2">
    <location>
        <position position="204"/>
    </location>
    <ligand>
        <name>GTP</name>
        <dbReference type="ChEBI" id="CHEBI:37565"/>
    </ligand>
</feature>
<feature type="binding site" evidence="2">
    <location>
        <position position="226"/>
    </location>
    <ligand>
        <name>GTP</name>
        <dbReference type="ChEBI" id="CHEBI:37565"/>
    </ligand>
</feature>
<keyword id="KW-0963">Cytoplasm</keyword>
<keyword id="KW-0206">Cytoskeleton</keyword>
<keyword id="KW-0342">GTP-binding</keyword>
<keyword id="KW-0460">Magnesium</keyword>
<keyword id="KW-0479">Metal-binding</keyword>
<keyword id="KW-0493">Microtubule</keyword>
<keyword id="KW-0547">Nucleotide-binding</keyword>
<keyword id="KW-1185">Reference proteome</keyword>
<protein>
    <recommendedName>
        <fullName>Tubulin beta-7 chain</fullName>
    </recommendedName>
    <alternativeName>
        <fullName>Beta-7-tubulin</fullName>
    </alternativeName>
</protein>
<sequence>MREILHVQAGQCGNQIGGKFWEVVSDEHGIDPKGNYVGTSRVQLERVNVYYNEASGGRYVPRAVLMDLEPGTMDSLRTGPHGQLFRPDNFIFGQNGAGNNWAKGHYTEGAELIDSVLDVVRKEAENCACLQGFQICHSLGGGTGSGMGTLLISKIKEEYPDRMMLTFSVFPSPKVSDTVVEPYNATLSVHQLVENGDECMVLDNEALYDICFRTLKLTNPSFGDLNRLISTTMSGATCCLRFPGQLNSDLRKLAVNLIPFPRLHFFMVGFAPLTSSSSQQYRALTIPELTQQMWDARNMMCAADPRHGRYLTASAMFRGKMSTKEVDEQMINVQNKNSSYFVEWIPNNVKSSVCDIPPTGLTMSSTFMGNSTSIQEMFRRVSEQFTVMFRRKAFLHWYTGEGMDEMEFTEAESNMNDLVSEYQQYQDAVADDNDEDYEDEAMEN</sequence>
<proteinExistence type="evidence at transcript level"/>